<keyword id="KW-0963">Cytoplasm</keyword>
<keyword id="KW-0238">DNA-binding</keyword>
<keyword id="KW-0520">NAD</keyword>
<keyword id="KW-0678">Repressor</keyword>
<keyword id="KW-0804">Transcription</keyword>
<keyword id="KW-0805">Transcription regulation</keyword>
<evidence type="ECO:0000255" key="1">
    <source>
        <dbReference type="HAMAP-Rule" id="MF_01131"/>
    </source>
</evidence>
<sequence>MDKNKNISMAVIKRLPKYHRYLNELMKNDVDRISSKELGEKIGFTASQIRQDLNCFGDFGQQGYGYNVKELYTQINSILGLDKEYNAVLIGAGNIGQAIANYSRFDKLGIMITAIFDANPKLIGIKIRDIEIRDIDELGSFLKSDSVDIGVICVPKKSAQKVSDELVNGGIRGIWNFAPIDLVVPEDVKVENVHLSESVSTLIYQLHQQR</sequence>
<dbReference type="EMBL" id="CP001078">
    <property type="protein sequence ID" value="ACD53390.1"/>
    <property type="molecule type" value="Genomic_DNA"/>
</dbReference>
<dbReference type="RefSeq" id="WP_003370953.1">
    <property type="nucleotide sequence ID" value="NC_010723.1"/>
</dbReference>
<dbReference type="SMR" id="B2UYY8"/>
<dbReference type="KEGG" id="cbt:CLH_0360"/>
<dbReference type="HOGENOM" id="CLU_061534_1_0_9"/>
<dbReference type="GO" id="GO:0005737">
    <property type="term" value="C:cytoplasm"/>
    <property type="evidence" value="ECO:0007669"/>
    <property type="project" value="UniProtKB-SubCell"/>
</dbReference>
<dbReference type="GO" id="GO:0003677">
    <property type="term" value="F:DNA binding"/>
    <property type="evidence" value="ECO:0007669"/>
    <property type="project" value="UniProtKB-UniRule"/>
</dbReference>
<dbReference type="GO" id="GO:0003700">
    <property type="term" value="F:DNA-binding transcription factor activity"/>
    <property type="evidence" value="ECO:0007669"/>
    <property type="project" value="UniProtKB-UniRule"/>
</dbReference>
<dbReference type="GO" id="GO:0045892">
    <property type="term" value="P:negative regulation of DNA-templated transcription"/>
    <property type="evidence" value="ECO:0007669"/>
    <property type="project" value="InterPro"/>
</dbReference>
<dbReference type="GO" id="GO:0051775">
    <property type="term" value="P:response to redox state"/>
    <property type="evidence" value="ECO:0007669"/>
    <property type="project" value="InterPro"/>
</dbReference>
<dbReference type="Gene3D" id="3.40.50.720">
    <property type="entry name" value="NAD(P)-binding Rossmann-like Domain"/>
    <property type="match status" value="1"/>
</dbReference>
<dbReference type="Gene3D" id="1.10.10.10">
    <property type="entry name" value="Winged helix-like DNA-binding domain superfamily/Winged helix DNA-binding domain"/>
    <property type="match status" value="1"/>
</dbReference>
<dbReference type="HAMAP" id="MF_01131">
    <property type="entry name" value="Rex"/>
    <property type="match status" value="1"/>
</dbReference>
<dbReference type="InterPro" id="IPR003781">
    <property type="entry name" value="CoA-bd"/>
</dbReference>
<dbReference type="InterPro" id="IPR036291">
    <property type="entry name" value="NAD(P)-bd_dom_sf"/>
</dbReference>
<dbReference type="InterPro" id="IPR009718">
    <property type="entry name" value="Rex_DNA-bd_C_dom"/>
</dbReference>
<dbReference type="InterPro" id="IPR022876">
    <property type="entry name" value="Tscrpt_rep_Rex"/>
</dbReference>
<dbReference type="InterPro" id="IPR036388">
    <property type="entry name" value="WH-like_DNA-bd_sf"/>
</dbReference>
<dbReference type="InterPro" id="IPR036390">
    <property type="entry name" value="WH_DNA-bd_sf"/>
</dbReference>
<dbReference type="NCBIfam" id="NF003989">
    <property type="entry name" value="PRK05472.1-3"/>
    <property type="match status" value="1"/>
</dbReference>
<dbReference type="NCBIfam" id="NF003990">
    <property type="entry name" value="PRK05472.1-4"/>
    <property type="match status" value="1"/>
</dbReference>
<dbReference type="NCBIfam" id="NF003993">
    <property type="entry name" value="PRK05472.2-2"/>
    <property type="match status" value="1"/>
</dbReference>
<dbReference type="NCBIfam" id="NF003994">
    <property type="entry name" value="PRK05472.2-3"/>
    <property type="match status" value="1"/>
</dbReference>
<dbReference type="NCBIfam" id="NF003995">
    <property type="entry name" value="PRK05472.2-4"/>
    <property type="match status" value="1"/>
</dbReference>
<dbReference type="NCBIfam" id="NF003996">
    <property type="entry name" value="PRK05472.2-5"/>
    <property type="match status" value="1"/>
</dbReference>
<dbReference type="PANTHER" id="PTHR35786">
    <property type="entry name" value="REDOX-SENSING TRANSCRIPTIONAL REPRESSOR REX"/>
    <property type="match status" value="1"/>
</dbReference>
<dbReference type="PANTHER" id="PTHR35786:SF1">
    <property type="entry name" value="REDOX-SENSING TRANSCRIPTIONAL REPRESSOR REX 1"/>
    <property type="match status" value="1"/>
</dbReference>
<dbReference type="Pfam" id="PF02629">
    <property type="entry name" value="CoA_binding"/>
    <property type="match status" value="1"/>
</dbReference>
<dbReference type="Pfam" id="PF06971">
    <property type="entry name" value="Put_DNA-bind_N"/>
    <property type="match status" value="1"/>
</dbReference>
<dbReference type="SMART" id="SM00881">
    <property type="entry name" value="CoA_binding"/>
    <property type="match status" value="1"/>
</dbReference>
<dbReference type="SUPFAM" id="SSF51735">
    <property type="entry name" value="NAD(P)-binding Rossmann-fold domains"/>
    <property type="match status" value="1"/>
</dbReference>
<dbReference type="SUPFAM" id="SSF46785">
    <property type="entry name" value="Winged helix' DNA-binding domain"/>
    <property type="match status" value="1"/>
</dbReference>
<protein>
    <recommendedName>
        <fullName evidence="1">Redox-sensing transcriptional repressor Rex</fullName>
    </recommendedName>
</protein>
<proteinExistence type="inferred from homology"/>
<reference key="1">
    <citation type="submission" date="2008-05" db="EMBL/GenBank/DDBJ databases">
        <title>Complete genome sequence of Clostridium botulinum E3 str. Alaska E43.</title>
        <authorList>
            <person name="Brinkac L.M."/>
            <person name="Brown J.L."/>
            <person name="Bruce D."/>
            <person name="Detter C."/>
            <person name="Munk C."/>
            <person name="Smith L.A."/>
            <person name="Smith T.J."/>
            <person name="Sutton G."/>
            <person name="Brettin T.S."/>
        </authorList>
    </citation>
    <scope>NUCLEOTIDE SEQUENCE [LARGE SCALE GENOMIC DNA]</scope>
    <source>
        <strain>Alaska E43 / Type E3</strain>
    </source>
</reference>
<comment type="function">
    <text evidence="1">Modulates transcription in response to changes in cellular NADH/NAD(+) redox state.</text>
</comment>
<comment type="subunit">
    <text evidence="1">Homodimer.</text>
</comment>
<comment type="subcellular location">
    <subcellularLocation>
        <location evidence="1">Cytoplasm</location>
    </subcellularLocation>
</comment>
<comment type="similarity">
    <text evidence="1">Belongs to the transcriptional regulatory Rex family.</text>
</comment>
<feature type="chain" id="PRO_1000137321" description="Redox-sensing transcriptional repressor Rex">
    <location>
        <begin position="1"/>
        <end position="210"/>
    </location>
</feature>
<feature type="DNA-binding region" description="H-T-H motif" evidence="1">
    <location>
        <begin position="17"/>
        <end position="56"/>
    </location>
</feature>
<feature type="binding site" evidence="1">
    <location>
        <begin position="91"/>
        <end position="96"/>
    </location>
    <ligand>
        <name>NAD(+)</name>
        <dbReference type="ChEBI" id="CHEBI:57540"/>
    </ligand>
</feature>
<organism>
    <name type="scientific">Clostridium botulinum (strain Alaska E43 / Type E3)</name>
    <dbReference type="NCBI Taxonomy" id="508767"/>
    <lineage>
        <taxon>Bacteria</taxon>
        <taxon>Bacillati</taxon>
        <taxon>Bacillota</taxon>
        <taxon>Clostridia</taxon>
        <taxon>Eubacteriales</taxon>
        <taxon>Clostridiaceae</taxon>
        <taxon>Clostridium</taxon>
    </lineage>
</organism>
<name>REX_CLOBA</name>
<accession>B2UYY8</accession>
<gene>
    <name evidence="1" type="primary">rex</name>
    <name type="ordered locus">CLH_0360</name>
</gene>